<dbReference type="EC" id="7.1.1.9"/>
<dbReference type="EMBL" id="Z47547">
    <property type="protein sequence ID" value="CAA87605.1"/>
    <property type="molecule type" value="Genomic_DNA"/>
</dbReference>
<dbReference type="PIR" id="S43951">
    <property type="entry name" value="S43951"/>
</dbReference>
<dbReference type="RefSeq" id="NP_062484.1">
    <property type="nucleotide sequence ID" value="NC_001677.2"/>
</dbReference>
<dbReference type="SMR" id="P48872"/>
<dbReference type="GeneID" id="809356"/>
<dbReference type="KEGG" id="ccp:ChcroMp05"/>
<dbReference type="GO" id="GO:0005743">
    <property type="term" value="C:mitochondrial inner membrane"/>
    <property type="evidence" value="ECO:0007669"/>
    <property type="project" value="UniProtKB-SubCell"/>
</dbReference>
<dbReference type="GO" id="GO:0004129">
    <property type="term" value="F:cytochrome-c oxidase activity"/>
    <property type="evidence" value="ECO:0007669"/>
    <property type="project" value="UniProtKB-EC"/>
</dbReference>
<dbReference type="GO" id="GO:0006123">
    <property type="term" value="P:mitochondrial electron transport, cytochrome c to oxygen"/>
    <property type="evidence" value="ECO:0007669"/>
    <property type="project" value="TreeGrafter"/>
</dbReference>
<dbReference type="CDD" id="cd01665">
    <property type="entry name" value="Cyt_c_Oxidase_III"/>
    <property type="match status" value="1"/>
</dbReference>
<dbReference type="FunFam" id="1.10.287.70:FF:000082">
    <property type="entry name" value="Cytochrome c oxidase subunit 3"/>
    <property type="match status" value="1"/>
</dbReference>
<dbReference type="FunFam" id="1.20.120.80:FF:000002">
    <property type="entry name" value="Cytochrome c oxidase subunit 3"/>
    <property type="match status" value="1"/>
</dbReference>
<dbReference type="Gene3D" id="1.10.287.70">
    <property type="match status" value="1"/>
</dbReference>
<dbReference type="Gene3D" id="1.20.120.80">
    <property type="entry name" value="Cytochrome c oxidase, subunit III, four-helix bundle"/>
    <property type="match status" value="1"/>
</dbReference>
<dbReference type="InterPro" id="IPR024791">
    <property type="entry name" value="Cyt_c/ubiquinol_Oxase_su3"/>
</dbReference>
<dbReference type="InterPro" id="IPR033945">
    <property type="entry name" value="Cyt_c_oxase_su3_dom"/>
</dbReference>
<dbReference type="InterPro" id="IPR000298">
    <property type="entry name" value="Cyt_c_oxidase-like_su3"/>
</dbReference>
<dbReference type="InterPro" id="IPR035973">
    <property type="entry name" value="Cyt_c_oxidase_su3-like_sf"/>
</dbReference>
<dbReference type="InterPro" id="IPR013833">
    <property type="entry name" value="Cyt_c_oxidase_su3_a-hlx"/>
</dbReference>
<dbReference type="PANTHER" id="PTHR11403:SF7">
    <property type="entry name" value="CYTOCHROME C OXIDASE SUBUNIT 3"/>
    <property type="match status" value="1"/>
</dbReference>
<dbReference type="PANTHER" id="PTHR11403">
    <property type="entry name" value="CYTOCHROME C OXIDASE SUBUNIT III"/>
    <property type="match status" value="1"/>
</dbReference>
<dbReference type="Pfam" id="PF00510">
    <property type="entry name" value="COX3"/>
    <property type="match status" value="1"/>
</dbReference>
<dbReference type="SUPFAM" id="SSF81452">
    <property type="entry name" value="Cytochrome c oxidase subunit III-like"/>
    <property type="match status" value="1"/>
</dbReference>
<dbReference type="PROSITE" id="PS50253">
    <property type="entry name" value="COX3"/>
    <property type="match status" value="1"/>
</dbReference>
<feature type="chain" id="PRO_0000183758" description="Cytochrome c oxidase subunit 3">
    <location>
        <begin position="1"/>
        <end position="272"/>
    </location>
</feature>
<feature type="transmembrane region" description="Helical" evidence="2">
    <location>
        <begin position="23"/>
        <end position="43"/>
    </location>
</feature>
<feature type="transmembrane region" description="Helical" evidence="2">
    <location>
        <begin position="45"/>
        <end position="65"/>
    </location>
</feature>
<feature type="transmembrane region" description="Helical" evidence="2">
    <location>
        <begin position="91"/>
        <end position="111"/>
    </location>
</feature>
<feature type="transmembrane region" description="Helical" evidence="2">
    <location>
        <begin position="137"/>
        <end position="157"/>
    </location>
</feature>
<feature type="transmembrane region" description="Helical" evidence="2">
    <location>
        <begin position="169"/>
        <end position="189"/>
    </location>
</feature>
<feature type="transmembrane region" description="Helical" evidence="2">
    <location>
        <begin position="210"/>
        <end position="230"/>
    </location>
</feature>
<feature type="transmembrane region" description="Helical" evidence="2">
    <location>
        <begin position="249"/>
        <end position="269"/>
    </location>
</feature>
<comment type="function">
    <text evidence="1">Component of the cytochrome c oxidase, the last enzyme in the mitochondrial electron transport chain which drives oxidative phosphorylation. The respiratory chain contains 3 multisubunit complexes succinate dehydrogenase (complex II, CII), ubiquinol-cytochrome c oxidoreductase (cytochrome b-c1 complex, complex III, CIII) and cytochrome c oxidase (complex IV, CIV), that cooperate to transfer electrons derived from NADH and succinate to molecular oxygen, creating an electrochemical gradient over the inner membrane that drives transmembrane transport and the ATP synthase. Cytochrome c oxidase is the component of the respiratory chain that catalyzes the reduction of oxygen to water. Electrons originating from reduced cytochrome c in the intermembrane space (IMS) are transferred via the dinuclear copper A center (CU(A)) of subunit 2 and heme A of subunit 1 to the active site in subunit 1, a binuclear center (BNC) formed by heme A3 and copper B (CU(B)). The BNC reduces molecular oxygen to 2 water molecules using 4 electrons from cytochrome c in the IMS and 4 protons from the mitochondrial matrix.</text>
</comment>
<comment type="catalytic activity">
    <reaction evidence="1">
        <text>4 Fe(II)-[cytochrome c] + O2 + 8 H(+)(in) = 4 Fe(III)-[cytochrome c] + 2 H2O + 4 H(+)(out)</text>
        <dbReference type="Rhea" id="RHEA:11436"/>
        <dbReference type="Rhea" id="RHEA-COMP:10350"/>
        <dbReference type="Rhea" id="RHEA-COMP:14399"/>
        <dbReference type="ChEBI" id="CHEBI:15377"/>
        <dbReference type="ChEBI" id="CHEBI:15378"/>
        <dbReference type="ChEBI" id="CHEBI:15379"/>
        <dbReference type="ChEBI" id="CHEBI:29033"/>
        <dbReference type="ChEBI" id="CHEBI:29034"/>
        <dbReference type="EC" id="7.1.1.9"/>
    </reaction>
    <physiologicalReaction direction="left-to-right" evidence="1">
        <dbReference type="Rhea" id="RHEA:11437"/>
    </physiologicalReaction>
</comment>
<comment type="subunit">
    <text evidence="1">Component of the cytochrome c oxidase (complex IV, CIV), a multisubunit enzyme composed of a catalytic core of 3 subunits and several supernumerary subunits. The complex exists as a monomer or a dimer and forms supercomplexes (SCs) in the inner mitochondrial membrane with ubiquinol-cytochrome c oxidoreductase (cytochrome b-c1 complex, complex III, CIII).</text>
</comment>
<comment type="subcellular location">
    <subcellularLocation>
        <location evidence="1">Mitochondrion inner membrane</location>
        <topology evidence="1">Multi-pass membrane protein</topology>
    </subcellularLocation>
</comment>
<comment type="similarity">
    <text evidence="3">Belongs to the cytochrome c oxidase subunit 3 family.</text>
</comment>
<name>COX3_CHOCR</name>
<reference key="1">
    <citation type="journal article" date="1995" name="J. Mol. Biol.">
        <title>Complete sequence of the mitochondrial DNA of the rhodophyte Chondrus crispus (Gigartinales). Gene content and genome organization.</title>
        <authorList>
            <person name="Leblanc C."/>
            <person name="Boyen C."/>
            <person name="Richard O."/>
            <person name="Bonnard G."/>
            <person name="Grienenberger J.-M."/>
            <person name="Kloareg B."/>
        </authorList>
    </citation>
    <scope>NUCLEOTIDE SEQUENCE [GENOMIC DNA]</scope>
    <source>
        <tissue>Apices</tissue>
    </source>
</reference>
<reference key="2">
    <citation type="journal article" date="1994" name="Nucleic Acids Res.">
        <title>Nucleotide sequence of the cox3 gene from Chondrus crispus: evidence that UGA encodes tryptophan and evolutionary implications.</title>
        <authorList>
            <person name="Boyen C."/>
            <person name="Leblanc C."/>
            <person name="Bonnard G."/>
            <person name="Grienenberger J.M."/>
            <person name="Kloareg B."/>
        </authorList>
    </citation>
    <scope>NUCLEOTIDE SEQUENCE [GENOMIC DNA]</scope>
    <source>
        <tissue>Apices</tissue>
    </source>
</reference>
<gene>
    <name type="primary">COX3</name>
</gene>
<evidence type="ECO:0000250" key="1">
    <source>
        <dbReference type="UniProtKB" id="P00420"/>
    </source>
</evidence>
<evidence type="ECO:0000255" key="2"/>
<evidence type="ECO:0000305" key="3"/>
<geneLocation type="mitochondrion"/>
<organism>
    <name type="scientific">Chondrus crispus</name>
    <name type="common">Carrageen Irish moss</name>
    <name type="synonym">Polymorpha crispa</name>
    <dbReference type="NCBI Taxonomy" id="2769"/>
    <lineage>
        <taxon>Eukaryota</taxon>
        <taxon>Rhodophyta</taxon>
        <taxon>Florideophyceae</taxon>
        <taxon>Rhodymeniophycidae</taxon>
        <taxon>Gigartinales</taxon>
        <taxon>Gigartinaceae</taxon>
        <taxon>Chondrus</taxon>
    </lineage>
</organism>
<keyword id="KW-0472">Membrane</keyword>
<keyword id="KW-0496">Mitochondrion</keyword>
<keyword id="KW-0999">Mitochondrion inner membrane</keyword>
<keyword id="KW-1278">Translocase</keyword>
<keyword id="KW-0812">Transmembrane</keyword>
<keyword id="KW-1133">Transmembrane helix</keyword>
<proteinExistence type="inferred from homology"/>
<accession>P48872</accession>
<sequence length="272" mass="31189">MTTLSQISKSVQRHPFHLVDPSPWPFVASLCAFSCAIGGVMYMHAYVNGSFILSISFFCLLLVMFTWWRDVIRESTFEGHHTGIVQQGLRFGVILFIISEILFFFAFFWAFFHSSLAPTIEIGSIWPPKGINVLNPWEIPFLNTLILLLSGCTVTWCHHSLVSNLRNQSVLSLFLTIVLAIVFTTFQAYEYSMADFRLSDGIYGSTFYMATGFHGFHVLVGTISLAVCLIRLLQYQLTQQHHFGFESAAWYWHFVDVVWLFLFVSIYWWGGS</sequence>
<protein>
    <recommendedName>
        <fullName>Cytochrome c oxidase subunit 3</fullName>
        <ecNumber>7.1.1.9</ecNumber>
    </recommendedName>
    <alternativeName>
        <fullName>Cytochrome c oxidase polypeptide III</fullName>
    </alternativeName>
</protein>